<gene>
    <name evidence="1" type="primary">gshA</name>
    <name type="ordered locus">VSAL_I0643</name>
</gene>
<organism>
    <name type="scientific">Aliivibrio salmonicida (strain LFI1238)</name>
    <name type="common">Vibrio salmonicida (strain LFI1238)</name>
    <dbReference type="NCBI Taxonomy" id="316275"/>
    <lineage>
        <taxon>Bacteria</taxon>
        <taxon>Pseudomonadati</taxon>
        <taxon>Pseudomonadota</taxon>
        <taxon>Gammaproteobacteria</taxon>
        <taxon>Vibrionales</taxon>
        <taxon>Vibrionaceae</taxon>
        <taxon>Aliivibrio</taxon>
    </lineage>
</organism>
<sequence length="521" mass="59104">MTEFTNRLQKVASNPKAFKNTGRGIERETLRFTLDAALSSKPHPAGVGSALTHKYITTDFAESLLEFITPVSHDVKTVLKQLEDVHHYTVSHMGEEKLWPLSMPCFVSKDDDITLAQYGKSNVGQLKTTYREGLKRRYGSVMQVISGVHFNFSFSNEFWDELLGEQTEKDRQDSVSDAYFGLIRNYYRFGWLIPYFFGASPALCGSFIQGRETTMNFESLGKTLYLPYATSLRLSDLGYTNDAQSDLKISLNSIDEYIEGLNKAIRTPSEEFAKIGLKEGDKHIQLNANVLQIENELYAPIRPKRVAKSGEKPSEALERSGIEYIEVRSLDVNPFSPIGVDEDQVRFLDLFLTWSVLTDSAPMDDSEMACWKDNWNKIVELGRKPGLELQIGCQGERLTQKAWAERVFDDLFTIAKKMDAVNGDDAYQQTHQRLSAMIENPELTISGRLLAETKKAGGIGIIGCKLAIQHRQAHLDHKYSFYTKDELDAEVERSVLAQKEIEASDTMPFSEYLDDYFNYLK</sequence>
<dbReference type="EC" id="6.3.2.2" evidence="1"/>
<dbReference type="EMBL" id="FM178379">
    <property type="protein sequence ID" value="CAQ78328.1"/>
    <property type="molecule type" value="Genomic_DNA"/>
</dbReference>
<dbReference type="RefSeq" id="WP_012549450.1">
    <property type="nucleotide sequence ID" value="NC_011312.1"/>
</dbReference>
<dbReference type="SMR" id="B6EGB3"/>
<dbReference type="KEGG" id="vsa:VSAL_I0643"/>
<dbReference type="eggNOG" id="COG2918">
    <property type="taxonomic scope" value="Bacteria"/>
</dbReference>
<dbReference type="HOGENOM" id="CLU_020728_3_0_6"/>
<dbReference type="UniPathway" id="UPA00142">
    <property type="reaction ID" value="UER00209"/>
</dbReference>
<dbReference type="Proteomes" id="UP000001730">
    <property type="component" value="Chromosome 1"/>
</dbReference>
<dbReference type="GO" id="GO:0005829">
    <property type="term" value="C:cytosol"/>
    <property type="evidence" value="ECO:0007669"/>
    <property type="project" value="TreeGrafter"/>
</dbReference>
<dbReference type="GO" id="GO:0005524">
    <property type="term" value="F:ATP binding"/>
    <property type="evidence" value="ECO:0007669"/>
    <property type="project" value="UniProtKB-KW"/>
</dbReference>
<dbReference type="GO" id="GO:0004357">
    <property type="term" value="F:glutamate-cysteine ligase activity"/>
    <property type="evidence" value="ECO:0007669"/>
    <property type="project" value="UniProtKB-UniRule"/>
</dbReference>
<dbReference type="GO" id="GO:0046872">
    <property type="term" value="F:metal ion binding"/>
    <property type="evidence" value="ECO:0007669"/>
    <property type="project" value="TreeGrafter"/>
</dbReference>
<dbReference type="GO" id="GO:0006750">
    <property type="term" value="P:glutathione biosynthetic process"/>
    <property type="evidence" value="ECO:0007669"/>
    <property type="project" value="UniProtKB-UniRule"/>
</dbReference>
<dbReference type="Gene3D" id="3.30.590.20">
    <property type="match status" value="1"/>
</dbReference>
<dbReference type="HAMAP" id="MF_00578">
    <property type="entry name" value="Glu_cys_ligase"/>
    <property type="match status" value="1"/>
</dbReference>
<dbReference type="InterPro" id="IPR014746">
    <property type="entry name" value="Gln_synth/guanido_kin_cat_dom"/>
</dbReference>
<dbReference type="InterPro" id="IPR007370">
    <property type="entry name" value="Glu_cys_ligase"/>
</dbReference>
<dbReference type="InterPro" id="IPR006334">
    <property type="entry name" value="Glut_cys_ligase"/>
</dbReference>
<dbReference type="NCBIfam" id="TIGR01434">
    <property type="entry name" value="glu_cys_ligase"/>
    <property type="match status" value="1"/>
</dbReference>
<dbReference type="PANTHER" id="PTHR38761">
    <property type="entry name" value="GLUTAMATE--CYSTEINE LIGASE"/>
    <property type="match status" value="1"/>
</dbReference>
<dbReference type="PANTHER" id="PTHR38761:SF1">
    <property type="entry name" value="GLUTAMATE--CYSTEINE LIGASE"/>
    <property type="match status" value="1"/>
</dbReference>
<dbReference type="Pfam" id="PF04262">
    <property type="entry name" value="Glu_cys_ligase"/>
    <property type="match status" value="1"/>
</dbReference>
<dbReference type="SUPFAM" id="SSF55931">
    <property type="entry name" value="Glutamine synthetase/guanido kinase"/>
    <property type="match status" value="1"/>
</dbReference>
<reference key="1">
    <citation type="journal article" date="2008" name="BMC Genomics">
        <title>The genome sequence of the fish pathogen Aliivibrio salmonicida strain LFI1238 shows extensive evidence of gene decay.</title>
        <authorList>
            <person name="Hjerde E."/>
            <person name="Lorentzen M.S."/>
            <person name="Holden M.T."/>
            <person name="Seeger K."/>
            <person name="Paulsen S."/>
            <person name="Bason N."/>
            <person name="Churcher C."/>
            <person name="Harris D."/>
            <person name="Norbertczak H."/>
            <person name="Quail M.A."/>
            <person name="Sanders S."/>
            <person name="Thurston S."/>
            <person name="Parkhill J."/>
            <person name="Willassen N.P."/>
            <person name="Thomson N.R."/>
        </authorList>
    </citation>
    <scope>NUCLEOTIDE SEQUENCE [LARGE SCALE GENOMIC DNA]</scope>
    <source>
        <strain>LFI1238</strain>
    </source>
</reference>
<keyword id="KW-0067">ATP-binding</keyword>
<keyword id="KW-0317">Glutathione biosynthesis</keyword>
<keyword id="KW-0436">Ligase</keyword>
<keyword id="KW-0547">Nucleotide-binding</keyword>
<protein>
    <recommendedName>
        <fullName evidence="1">Glutamate--cysteine ligase</fullName>
        <ecNumber evidence="1">6.3.2.2</ecNumber>
    </recommendedName>
    <alternativeName>
        <fullName evidence="1">Gamma-ECS</fullName>
        <shortName evidence="1">GCS</shortName>
    </alternativeName>
    <alternativeName>
        <fullName evidence="1">Gamma-glutamylcysteine synthetase</fullName>
    </alternativeName>
</protein>
<accession>B6EGB3</accession>
<proteinExistence type="inferred from homology"/>
<feature type="chain" id="PRO_1000129585" description="Glutamate--cysteine ligase">
    <location>
        <begin position="1"/>
        <end position="521"/>
    </location>
</feature>
<evidence type="ECO:0000255" key="1">
    <source>
        <dbReference type="HAMAP-Rule" id="MF_00578"/>
    </source>
</evidence>
<comment type="catalytic activity">
    <reaction evidence="1">
        <text>L-cysteine + L-glutamate + ATP = gamma-L-glutamyl-L-cysteine + ADP + phosphate + H(+)</text>
        <dbReference type="Rhea" id="RHEA:13285"/>
        <dbReference type="ChEBI" id="CHEBI:15378"/>
        <dbReference type="ChEBI" id="CHEBI:29985"/>
        <dbReference type="ChEBI" id="CHEBI:30616"/>
        <dbReference type="ChEBI" id="CHEBI:35235"/>
        <dbReference type="ChEBI" id="CHEBI:43474"/>
        <dbReference type="ChEBI" id="CHEBI:58173"/>
        <dbReference type="ChEBI" id="CHEBI:456216"/>
        <dbReference type="EC" id="6.3.2.2"/>
    </reaction>
</comment>
<comment type="pathway">
    <text evidence="1">Sulfur metabolism; glutathione biosynthesis; glutathione from L-cysteine and L-glutamate: step 1/2.</text>
</comment>
<comment type="similarity">
    <text evidence="1">Belongs to the glutamate--cysteine ligase type 1 family. Type 1 subfamily.</text>
</comment>
<name>GSH1_ALISL</name>